<accession>Q9LZU9</accession>
<evidence type="ECO:0000250" key="1"/>
<evidence type="ECO:0000250" key="2">
    <source>
        <dbReference type="UniProtKB" id="Q9FIJ0"/>
    </source>
</evidence>
<evidence type="ECO:0000255" key="3"/>
<evidence type="ECO:0000255" key="4">
    <source>
        <dbReference type="PROSITE-ProRule" id="PRU00448"/>
    </source>
</evidence>
<evidence type="ECO:0000255" key="5">
    <source>
        <dbReference type="PROSITE-ProRule" id="PRU00716"/>
    </source>
</evidence>
<evidence type="ECO:0000256" key="6">
    <source>
        <dbReference type="SAM" id="MobiDB-lite"/>
    </source>
</evidence>
<evidence type="ECO:0000305" key="7"/>
<proteinExistence type="inferred from homology"/>
<comment type="function">
    <text>Calcium-dependent NADPH oxidase that generates superoxide.</text>
</comment>
<comment type="subunit">
    <text evidence="1">Monomer and homodimer.</text>
</comment>
<comment type="subcellular location">
    <subcellularLocation>
        <location evidence="7">Membrane</location>
        <topology evidence="7">Multi-pass membrane protein</topology>
    </subcellularLocation>
</comment>
<comment type="similarity">
    <text evidence="7">Belongs to the RBOH (TC 5.B.1.3) family.</text>
</comment>
<comment type="sequence caution" evidence="7">
    <conflict type="erroneous gene model prediction">
        <sequence resource="EMBL-CDS" id="CAB82805"/>
    </conflict>
</comment>
<gene>
    <name type="primary">RBOHJ</name>
    <name type="ordered locus">At3g45810</name>
    <name type="ORF">F16L2.20</name>
</gene>
<name>RBOHJ_ARATH</name>
<dbReference type="EC" id="1.11.1.-"/>
<dbReference type="EC" id="1.6.3.-"/>
<dbReference type="EMBL" id="AL162459">
    <property type="protein sequence ID" value="CAB82805.1"/>
    <property type="status" value="ALT_SEQ"/>
    <property type="molecule type" value="Genomic_DNA"/>
</dbReference>
<dbReference type="EMBL" id="CP002686">
    <property type="protein sequence ID" value="AEE78076.1"/>
    <property type="molecule type" value="Genomic_DNA"/>
</dbReference>
<dbReference type="PIR" id="T47521">
    <property type="entry name" value="T47521"/>
</dbReference>
<dbReference type="RefSeq" id="NP_190167.2">
    <property type="nucleotide sequence ID" value="NM_114450.3"/>
</dbReference>
<dbReference type="SMR" id="Q9LZU9"/>
<dbReference type="FunCoup" id="Q9LZU9">
    <property type="interactions" value="279"/>
</dbReference>
<dbReference type="STRING" id="3702.Q9LZU9"/>
<dbReference type="iPTMnet" id="Q9LZU9"/>
<dbReference type="PaxDb" id="3702-AT3G45810.1"/>
<dbReference type="ProteomicsDB" id="236528"/>
<dbReference type="EnsemblPlants" id="AT3G45810.1">
    <property type="protein sequence ID" value="AT3G45810.1"/>
    <property type="gene ID" value="AT3G45810"/>
</dbReference>
<dbReference type="GeneID" id="823724"/>
<dbReference type="Gramene" id="AT3G45810.1">
    <property type="protein sequence ID" value="AT3G45810.1"/>
    <property type="gene ID" value="AT3G45810"/>
</dbReference>
<dbReference type="KEGG" id="ath:AT3G45810"/>
<dbReference type="Araport" id="AT3G45810"/>
<dbReference type="TAIR" id="AT3G45810">
    <property type="gene designation" value="RBOHJ"/>
</dbReference>
<dbReference type="eggNOG" id="KOG0039">
    <property type="taxonomic scope" value="Eukaryota"/>
</dbReference>
<dbReference type="HOGENOM" id="CLU_005646_6_0_1"/>
<dbReference type="InParanoid" id="Q9LZU9"/>
<dbReference type="OMA" id="CMEVGQY"/>
<dbReference type="PhylomeDB" id="Q9LZU9"/>
<dbReference type="BioCyc" id="ARA:AT3G45810-MONOMER"/>
<dbReference type="PRO" id="PR:Q9LZU9"/>
<dbReference type="Proteomes" id="UP000006548">
    <property type="component" value="Chromosome 3"/>
</dbReference>
<dbReference type="ExpressionAtlas" id="Q9LZU9">
    <property type="expression patterns" value="baseline and differential"/>
</dbReference>
<dbReference type="GO" id="GO:0016020">
    <property type="term" value="C:membrane"/>
    <property type="evidence" value="ECO:0007669"/>
    <property type="project" value="UniProtKB-SubCell"/>
</dbReference>
<dbReference type="GO" id="GO:0005509">
    <property type="term" value="F:calcium ion binding"/>
    <property type="evidence" value="ECO:0007669"/>
    <property type="project" value="InterPro"/>
</dbReference>
<dbReference type="GO" id="GO:0050664">
    <property type="term" value="F:oxidoreductase activity, acting on NAD(P)H, oxygen as acceptor"/>
    <property type="evidence" value="ECO:0007669"/>
    <property type="project" value="InterPro"/>
</dbReference>
<dbReference type="GO" id="GO:0004601">
    <property type="term" value="F:peroxidase activity"/>
    <property type="evidence" value="ECO:0007669"/>
    <property type="project" value="UniProtKB-KW"/>
</dbReference>
<dbReference type="CDD" id="cd06186">
    <property type="entry name" value="NOX_Duox_like_FAD_NADP"/>
    <property type="match status" value="1"/>
</dbReference>
<dbReference type="FunFam" id="3.40.50.80:FF:000026">
    <property type="entry name" value="Putative respiratory burst oxidase"/>
    <property type="match status" value="1"/>
</dbReference>
<dbReference type="FunFam" id="2.40.30.10:FF:000019">
    <property type="entry name" value="Respiratory burst oxidase homolog A"/>
    <property type="match status" value="1"/>
</dbReference>
<dbReference type="Gene3D" id="1.10.238.10">
    <property type="entry name" value="EF-hand"/>
    <property type="match status" value="1"/>
</dbReference>
<dbReference type="Gene3D" id="3.40.50.80">
    <property type="entry name" value="Nucleotide-binding domain of ferredoxin-NADP reductase (FNR) module"/>
    <property type="match status" value="1"/>
</dbReference>
<dbReference type="Gene3D" id="2.40.30.10">
    <property type="entry name" value="Translation factors"/>
    <property type="match status" value="1"/>
</dbReference>
<dbReference type="InterPro" id="IPR000778">
    <property type="entry name" value="Cyt_b245_heavy_chain"/>
</dbReference>
<dbReference type="InterPro" id="IPR011992">
    <property type="entry name" value="EF-hand-dom_pair"/>
</dbReference>
<dbReference type="InterPro" id="IPR018247">
    <property type="entry name" value="EF_Hand_1_Ca_BS"/>
</dbReference>
<dbReference type="InterPro" id="IPR002048">
    <property type="entry name" value="EF_hand_dom"/>
</dbReference>
<dbReference type="InterPro" id="IPR013112">
    <property type="entry name" value="FAD-bd_8"/>
</dbReference>
<dbReference type="InterPro" id="IPR017927">
    <property type="entry name" value="FAD-bd_FR_type"/>
</dbReference>
<dbReference type="InterPro" id="IPR013130">
    <property type="entry name" value="Fe3_Rdtase_TM_dom"/>
</dbReference>
<dbReference type="InterPro" id="IPR013121">
    <property type="entry name" value="Fe_red_NAD-bd_6"/>
</dbReference>
<dbReference type="InterPro" id="IPR039261">
    <property type="entry name" value="FNR_nucleotide-bd"/>
</dbReference>
<dbReference type="InterPro" id="IPR013623">
    <property type="entry name" value="NADPH_Ox"/>
</dbReference>
<dbReference type="InterPro" id="IPR050369">
    <property type="entry name" value="RBOH/FRE"/>
</dbReference>
<dbReference type="InterPro" id="IPR017938">
    <property type="entry name" value="Riboflavin_synthase-like_b-brl"/>
</dbReference>
<dbReference type="PANTHER" id="PTHR11972">
    <property type="entry name" value="NADPH OXIDASE"/>
    <property type="match status" value="1"/>
</dbReference>
<dbReference type="PANTHER" id="PTHR11972:SF54">
    <property type="entry name" value="RESPIRATORY BURST OXIDASE HOMOLOG PROTEIN J-RELATED"/>
    <property type="match status" value="1"/>
</dbReference>
<dbReference type="Pfam" id="PF08022">
    <property type="entry name" value="FAD_binding_8"/>
    <property type="match status" value="1"/>
</dbReference>
<dbReference type="Pfam" id="PF01794">
    <property type="entry name" value="Ferric_reduct"/>
    <property type="match status" value="1"/>
</dbReference>
<dbReference type="Pfam" id="PF08030">
    <property type="entry name" value="NAD_binding_6"/>
    <property type="match status" value="1"/>
</dbReference>
<dbReference type="Pfam" id="PF08414">
    <property type="entry name" value="NADPH_Ox"/>
    <property type="match status" value="1"/>
</dbReference>
<dbReference type="PRINTS" id="PR00466">
    <property type="entry name" value="GP91PHOX"/>
</dbReference>
<dbReference type="SFLD" id="SFLDG01169">
    <property type="entry name" value="NADPH_oxidase_subgroup_(NOX)"/>
    <property type="match status" value="1"/>
</dbReference>
<dbReference type="SUPFAM" id="SSF47473">
    <property type="entry name" value="EF-hand"/>
    <property type="match status" value="1"/>
</dbReference>
<dbReference type="SUPFAM" id="SSF52343">
    <property type="entry name" value="Ferredoxin reductase-like, C-terminal NADP-linked domain"/>
    <property type="match status" value="1"/>
</dbReference>
<dbReference type="SUPFAM" id="SSF63380">
    <property type="entry name" value="Riboflavin synthase domain-like"/>
    <property type="match status" value="1"/>
</dbReference>
<dbReference type="PROSITE" id="PS00018">
    <property type="entry name" value="EF_HAND_1"/>
    <property type="match status" value="1"/>
</dbReference>
<dbReference type="PROSITE" id="PS50222">
    <property type="entry name" value="EF_HAND_2"/>
    <property type="match status" value="1"/>
</dbReference>
<dbReference type="PROSITE" id="PS51384">
    <property type="entry name" value="FAD_FR"/>
    <property type="match status" value="1"/>
</dbReference>
<feature type="chain" id="PRO_0000313762" description="Putative respiratory burst oxidase homolog protein J">
    <location>
        <begin position="1"/>
        <end position="912"/>
    </location>
</feature>
<feature type="topological domain" description="Cytoplasmic" evidence="3">
    <location>
        <begin position="1"/>
        <end position="323"/>
    </location>
</feature>
<feature type="transmembrane region" description="Helical; Name=1" evidence="3">
    <location>
        <begin position="324"/>
        <end position="344"/>
    </location>
</feature>
<feature type="topological domain" description="Extracellular" evidence="3">
    <location>
        <begin position="345"/>
        <end position="363"/>
    </location>
</feature>
<feature type="transmembrane region" description="Helical; Name=2" evidence="3">
    <location>
        <begin position="364"/>
        <end position="384"/>
    </location>
</feature>
<feature type="topological domain" description="Cytoplasmic" evidence="3">
    <location>
        <begin position="385"/>
        <end position="410"/>
    </location>
</feature>
<feature type="transmembrane region" description="Helical; Name=3" evidence="3">
    <location>
        <begin position="411"/>
        <end position="431"/>
    </location>
</feature>
<feature type="topological domain" description="Extracellular" evidence="3">
    <location>
        <begin position="432"/>
        <end position="458"/>
    </location>
</feature>
<feature type="transmembrane region" description="Helical; Name=4" evidence="3">
    <location>
        <begin position="459"/>
        <end position="479"/>
    </location>
</feature>
<feature type="topological domain" description="Cytoplasmic" evidence="3">
    <location>
        <begin position="480"/>
        <end position="510"/>
    </location>
</feature>
<feature type="transmembrane region" description="Helical; Name=5" evidence="3">
    <location>
        <begin position="511"/>
        <end position="531"/>
    </location>
</feature>
<feature type="topological domain" description="Extracellular" evidence="3">
    <location>
        <begin position="532"/>
        <end position="697"/>
    </location>
</feature>
<feature type="transmembrane region" description="Helical; Name=6" evidence="3">
    <location>
        <begin position="698"/>
        <end position="718"/>
    </location>
</feature>
<feature type="topological domain" description="Cytoplasmic" evidence="3">
    <location>
        <begin position="719"/>
        <end position="912"/>
    </location>
</feature>
<feature type="domain" description="EF-hand" evidence="4">
    <location>
        <begin position="205"/>
        <end position="240"/>
    </location>
</feature>
<feature type="domain" description="Ferric oxidoreductase">
    <location>
        <begin position="366"/>
        <end position="523"/>
    </location>
</feature>
<feature type="domain" description="FAD-binding FR-type" evidence="5">
    <location>
        <begin position="562"/>
        <end position="695"/>
    </location>
</feature>
<feature type="region of interest" description="Disordered" evidence="6">
    <location>
        <begin position="1"/>
        <end position="51"/>
    </location>
</feature>
<feature type="region of interest" description="Disordered" evidence="6">
    <location>
        <begin position="73"/>
        <end position="112"/>
    </location>
</feature>
<feature type="region of interest" description="EF-hand-like 1" evidence="1">
    <location>
        <begin position="147"/>
        <end position="155"/>
    </location>
</feature>
<feature type="region of interest" description="EF-hand-like 2" evidence="1">
    <location>
        <begin position="181"/>
        <end position="193"/>
    </location>
</feature>
<feature type="compositionally biased region" description="Polar residues" evidence="6">
    <location>
        <begin position="29"/>
        <end position="44"/>
    </location>
</feature>
<feature type="compositionally biased region" description="Polar residues" evidence="6">
    <location>
        <begin position="78"/>
        <end position="87"/>
    </location>
</feature>
<feature type="binding site" evidence="4">
    <location>
        <position position="218"/>
    </location>
    <ligand>
        <name>Ca(2+)</name>
        <dbReference type="ChEBI" id="CHEBI:29108"/>
    </ligand>
</feature>
<feature type="binding site" evidence="4">
    <location>
        <position position="220"/>
    </location>
    <ligand>
        <name>Ca(2+)</name>
        <dbReference type="ChEBI" id="CHEBI:29108"/>
    </ligand>
</feature>
<feature type="binding site" evidence="4">
    <location>
        <position position="222"/>
    </location>
    <ligand>
        <name>Ca(2+)</name>
        <dbReference type="ChEBI" id="CHEBI:29108"/>
    </ligand>
</feature>
<feature type="binding site" evidence="4">
    <location>
        <position position="224"/>
    </location>
    <ligand>
        <name>Ca(2+)</name>
        <dbReference type="ChEBI" id="CHEBI:29108"/>
    </ligand>
</feature>
<feature type="binding site" evidence="4">
    <location>
        <position position="229"/>
    </location>
    <ligand>
        <name>Ca(2+)</name>
        <dbReference type="ChEBI" id="CHEBI:29108"/>
    </ligand>
</feature>
<feature type="modified residue" description="Phosphoserine" evidence="2">
    <location>
        <position position="294"/>
    </location>
</feature>
<sequence length="912" mass="102937">MKNNKKVGTEDSTKWMLESVEIDPKGDSSVKQPESTINSNNPESSGAGGGILKNVSKNLAVGSIIRSMSVNKWRKSGNLGSPSTRKSGNLGPPLPVSQVKRPGPQRVERTTSSAARGLQSLRFLDRTVTGRERDSWRSIENRFNQFAVDGRLPKDKFGVCIGMGDTLEFAAKVYEALGRRRQIKTENGIDKEQLKLFWEDMIKKDLDCRLQIFFDMCDKDGDGKLTEEEVKEVIVLSASANRLVNLKKNAASYASLIMEELDPNEQGYIEMWQLEVLLTGIVSNADSHKVVRKSQQLTRAMIPKRYRTPTSKYVVVTAELMYEHWKKIWVVTLWLAVNVVLFMWKYEEFTTSPLYNITGRCLCAAKGTAEILKLNMALILVPVLRRTLTFLRSTFLNHLIPFDDNINFHKLIAVAIAVISLLHTALHMLCNYPRLSSCPYNFYSDYAGNLLGAKQPTYLGLMLTPVSVTGVLMIIFMGISFTLAMHYFRRNIVKLPIPFNRLAGFNSFWYAHHLLVIAYALLIIHGYILIIEKPWYQKTTWMYVAIPMVLYASERLFSRVQEHNHRVHIIKAIVYSGNVLALYMTKPQGFKYKSGMYMFVKCPDISKFEWHPFSITSAPGDEYLSVHIRALGDWTSELRNRFAETCEPHQKSKPSPNDLIRMETRARGANPHVEESQALFPRIFIKGPYGAPAQSYQKFDILLLIGLGIGATPFISILKDMLNNLKPGIPKTGQKYEGSVGGESLGGSSVYGGSSVNGGGSVNGGGSVSGGGRKFPQRAYFYWVTREQASFEWFKGVMDDIAVYDKTNVIEMHNYLTSMYEAGDARSALIAMVQKLQHAKNGVDIVSESRIRTHFARPNWRKVFSELSNKHETSRIGVFYCGSPTLVRPLKSLCQEFSLESSTRFTFHKENF</sequence>
<keyword id="KW-0106">Calcium</keyword>
<keyword id="KW-0274">FAD</keyword>
<keyword id="KW-0285">Flavoprotein</keyword>
<keyword id="KW-0472">Membrane</keyword>
<keyword id="KW-0479">Metal-binding</keyword>
<keyword id="KW-0521">NADP</keyword>
<keyword id="KW-0560">Oxidoreductase</keyword>
<keyword id="KW-0575">Peroxidase</keyword>
<keyword id="KW-0597">Phosphoprotein</keyword>
<keyword id="KW-1185">Reference proteome</keyword>
<keyword id="KW-0677">Repeat</keyword>
<keyword id="KW-0812">Transmembrane</keyword>
<keyword id="KW-1133">Transmembrane helix</keyword>
<reference key="1">
    <citation type="journal article" date="2000" name="Nature">
        <title>Sequence and analysis of chromosome 3 of the plant Arabidopsis thaliana.</title>
        <authorList>
            <person name="Salanoubat M."/>
            <person name="Lemcke K."/>
            <person name="Rieger M."/>
            <person name="Ansorge W."/>
            <person name="Unseld M."/>
            <person name="Fartmann B."/>
            <person name="Valle G."/>
            <person name="Bloecker H."/>
            <person name="Perez-Alonso M."/>
            <person name="Obermaier B."/>
            <person name="Delseny M."/>
            <person name="Boutry M."/>
            <person name="Grivell L.A."/>
            <person name="Mache R."/>
            <person name="Puigdomenech P."/>
            <person name="De Simone V."/>
            <person name="Choisne N."/>
            <person name="Artiguenave F."/>
            <person name="Robert C."/>
            <person name="Brottier P."/>
            <person name="Wincker P."/>
            <person name="Cattolico L."/>
            <person name="Weissenbach J."/>
            <person name="Saurin W."/>
            <person name="Quetier F."/>
            <person name="Schaefer M."/>
            <person name="Mueller-Auer S."/>
            <person name="Gabel C."/>
            <person name="Fuchs M."/>
            <person name="Benes V."/>
            <person name="Wurmbach E."/>
            <person name="Drzonek H."/>
            <person name="Erfle H."/>
            <person name="Jordan N."/>
            <person name="Bangert S."/>
            <person name="Wiedelmann R."/>
            <person name="Kranz H."/>
            <person name="Voss H."/>
            <person name="Holland R."/>
            <person name="Brandt P."/>
            <person name="Nyakatura G."/>
            <person name="Vezzi A."/>
            <person name="D'Angelo M."/>
            <person name="Pallavicini A."/>
            <person name="Toppo S."/>
            <person name="Simionati B."/>
            <person name="Conrad A."/>
            <person name="Hornischer K."/>
            <person name="Kauer G."/>
            <person name="Loehnert T.-H."/>
            <person name="Nordsiek G."/>
            <person name="Reichelt J."/>
            <person name="Scharfe M."/>
            <person name="Schoen O."/>
            <person name="Bargues M."/>
            <person name="Terol J."/>
            <person name="Climent J."/>
            <person name="Navarro P."/>
            <person name="Collado C."/>
            <person name="Perez-Perez A."/>
            <person name="Ottenwaelder B."/>
            <person name="Duchemin D."/>
            <person name="Cooke R."/>
            <person name="Laudie M."/>
            <person name="Berger-Llauro C."/>
            <person name="Purnelle B."/>
            <person name="Masuy D."/>
            <person name="de Haan M."/>
            <person name="Maarse A.C."/>
            <person name="Alcaraz J.-P."/>
            <person name="Cottet A."/>
            <person name="Casacuberta E."/>
            <person name="Monfort A."/>
            <person name="Argiriou A."/>
            <person name="Flores M."/>
            <person name="Liguori R."/>
            <person name="Vitale D."/>
            <person name="Mannhaupt G."/>
            <person name="Haase D."/>
            <person name="Schoof H."/>
            <person name="Rudd S."/>
            <person name="Zaccaria P."/>
            <person name="Mewes H.-W."/>
            <person name="Mayer K.F.X."/>
            <person name="Kaul S."/>
            <person name="Town C.D."/>
            <person name="Koo H.L."/>
            <person name="Tallon L.J."/>
            <person name="Jenkins J."/>
            <person name="Rooney T."/>
            <person name="Rizzo M."/>
            <person name="Walts A."/>
            <person name="Utterback T."/>
            <person name="Fujii C.Y."/>
            <person name="Shea T.P."/>
            <person name="Creasy T.H."/>
            <person name="Haas B."/>
            <person name="Maiti R."/>
            <person name="Wu D."/>
            <person name="Peterson J."/>
            <person name="Van Aken S."/>
            <person name="Pai G."/>
            <person name="Militscher J."/>
            <person name="Sellers P."/>
            <person name="Gill J.E."/>
            <person name="Feldblyum T.V."/>
            <person name="Preuss D."/>
            <person name="Lin X."/>
            <person name="Nierman W.C."/>
            <person name="Salzberg S.L."/>
            <person name="White O."/>
            <person name="Venter J.C."/>
            <person name="Fraser C.M."/>
            <person name="Kaneko T."/>
            <person name="Nakamura Y."/>
            <person name="Sato S."/>
            <person name="Kato T."/>
            <person name="Asamizu E."/>
            <person name="Sasamoto S."/>
            <person name="Kimura T."/>
            <person name="Idesawa K."/>
            <person name="Kawashima K."/>
            <person name="Kishida Y."/>
            <person name="Kiyokawa C."/>
            <person name="Kohara M."/>
            <person name="Matsumoto M."/>
            <person name="Matsuno A."/>
            <person name="Muraki A."/>
            <person name="Nakayama S."/>
            <person name="Nakazaki N."/>
            <person name="Shinpo S."/>
            <person name="Takeuchi C."/>
            <person name="Wada T."/>
            <person name="Watanabe A."/>
            <person name="Yamada M."/>
            <person name="Yasuda M."/>
            <person name="Tabata S."/>
        </authorList>
    </citation>
    <scope>NUCLEOTIDE SEQUENCE [LARGE SCALE GENOMIC DNA]</scope>
    <source>
        <strain>cv. Columbia</strain>
    </source>
</reference>
<reference key="2">
    <citation type="journal article" date="2017" name="Plant J.">
        <title>Araport11: a complete reannotation of the Arabidopsis thaliana reference genome.</title>
        <authorList>
            <person name="Cheng C.Y."/>
            <person name="Krishnakumar V."/>
            <person name="Chan A.P."/>
            <person name="Thibaud-Nissen F."/>
            <person name="Schobel S."/>
            <person name="Town C.D."/>
        </authorList>
    </citation>
    <scope>GENOME REANNOTATION</scope>
    <source>
        <strain>cv. Columbia</strain>
    </source>
</reference>
<reference key="3">
    <citation type="journal article" date="2006" name="Plant Physiol.">
        <title>Production of reactive oxygen species by plant NADPH oxidases.</title>
        <authorList>
            <person name="Sagi M."/>
            <person name="Fluhr R."/>
        </authorList>
    </citation>
    <scope>GENE FAMILY</scope>
    <scope>NOMENCLATURE</scope>
</reference>
<organism>
    <name type="scientific">Arabidopsis thaliana</name>
    <name type="common">Mouse-ear cress</name>
    <dbReference type="NCBI Taxonomy" id="3702"/>
    <lineage>
        <taxon>Eukaryota</taxon>
        <taxon>Viridiplantae</taxon>
        <taxon>Streptophyta</taxon>
        <taxon>Embryophyta</taxon>
        <taxon>Tracheophyta</taxon>
        <taxon>Spermatophyta</taxon>
        <taxon>Magnoliopsida</taxon>
        <taxon>eudicotyledons</taxon>
        <taxon>Gunneridae</taxon>
        <taxon>Pentapetalae</taxon>
        <taxon>rosids</taxon>
        <taxon>malvids</taxon>
        <taxon>Brassicales</taxon>
        <taxon>Brassicaceae</taxon>
        <taxon>Camelineae</taxon>
        <taxon>Arabidopsis</taxon>
    </lineage>
</organism>
<protein>
    <recommendedName>
        <fullName>Putative respiratory burst oxidase homolog protein J</fullName>
        <ecNumber>1.11.1.-</ecNumber>
        <ecNumber>1.6.3.-</ecNumber>
    </recommendedName>
    <alternativeName>
        <fullName>NADPH oxidase RBOHJ</fullName>
        <shortName>AtRBOHJ</shortName>
    </alternativeName>
</protein>